<gene>
    <name type="ORF">ORF202</name>
</gene>
<organism>
    <name type="scientific">Acidianus filamentous virus 2 (isolate Italy/Pozzuoli)</name>
    <name type="common">AFV-2</name>
    <dbReference type="NCBI Taxonomy" id="654910"/>
    <lineage>
        <taxon>Viruses</taxon>
        <taxon>Adnaviria</taxon>
        <taxon>Zilligvirae</taxon>
        <taxon>Taleaviricota</taxon>
        <taxon>Tokiviricetes</taxon>
        <taxon>Ligamenvirales</taxon>
        <taxon>Lipothrixviridae</taxon>
        <taxon>Deltalipothrixvirus</taxon>
        <taxon>Acidianus filamentous virus 2</taxon>
    </lineage>
</organism>
<dbReference type="EMBL" id="AJ854042">
    <property type="protein sequence ID" value="CAH69436.1"/>
    <property type="molecule type" value="Genomic_DNA"/>
</dbReference>
<dbReference type="RefSeq" id="YP_001496974.1">
    <property type="nucleotide sequence ID" value="NC_009884.1"/>
</dbReference>
<dbReference type="KEGG" id="vg:5656056"/>
<dbReference type="Proteomes" id="UP000006364">
    <property type="component" value="Genome"/>
</dbReference>
<dbReference type="GO" id="GO:0033644">
    <property type="term" value="C:host cell membrane"/>
    <property type="evidence" value="ECO:0007669"/>
    <property type="project" value="UniProtKB-SubCell"/>
</dbReference>
<dbReference type="GO" id="GO:0016020">
    <property type="term" value="C:membrane"/>
    <property type="evidence" value="ECO:0007669"/>
    <property type="project" value="UniProtKB-KW"/>
</dbReference>
<protein>
    <recommendedName>
        <fullName>Putative transmembrane protein ORF202</fullName>
    </recommendedName>
</protein>
<keyword id="KW-1043">Host membrane</keyword>
<keyword id="KW-0472">Membrane</keyword>
<keyword id="KW-1185">Reference proteome</keyword>
<keyword id="KW-0812">Transmembrane</keyword>
<keyword id="KW-1133">Transmembrane helix</keyword>
<feature type="chain" id="PRO_0000384517" description="Putative transmembrane protein ORF202">
    <location>
        <begin position="1"/>
        <end position="202"/>
    </location>
</feature>
<feature type="transmembrane region" description="Helical" evidence="1">
    <location>
        <begin position="13"/>
        <end position="33"/>
    </location>
</feature>
<feature type="transmembrane region" description="Helical" evidence="1">
    <location>
        <begin position="40"/>
        <end position="60"/>
    </location>
</feature>
<feature type="transmembrane region" description="Helical" evidence="1">
    <location>
        <begin position="87"/>
        <end position="107"/>
    </location>
</feature>
<feature type="transmembrane region" description="Helical" evidence="1">
    <location>
        <begin position="156"/>
        <end position="176"/>
    </location>
</feature>
<feature type="transmembrane region" description="Helical" evidence="1">
    <location>
        <begin position="177"/>
        <end position="197"/>
    </location>
</feature>
<accession>Q573C0</accession>
<comment type="subcellular location">
    <subcellularLocation>
        <location evidence="2">Host membrane</location>
        <topology evidence="2">Multi-pass membrane protein</topology>
    </subcellularLocation>
</comment>
<reference key="1">
    <citation type="journal article" date="2005" name="J. Bacteriol.">
        <title>Structure and genome organization of AFV2, a novel archaeal lipothrixvirus with unusual terminal and core structures.</title>
        <authorList>
            <person name="Haring M."/>
            <person name="Vestergaard G."/>
            <person name="Brugger K."/>
            <person name="Rachel R."/>
            <person name="Garrett R.A."/>
            <person name="Prangishvili D."/>
        </authorList>
    </citation>
    <scope>NUCLEOTIDE SEQUENCE [GENOMIC DNA]</scope>
</reference>
<name>Y202_AFV2P</name>
<proteinExistence type="predicted"/>
<evidence type="ECO:0000255" key="1"/>
<evidence type="ECO:0000305" key="2"/>
<organismHost>
    <name type="scientific">Acidianus sp. F28</name>
    <dbReference type="NCBI Taxonomy" id="315458"/>
</organismHost>
<sequence>MNTHYLTINLLRAIAFGLAYSILEVNVPLFHYIPVVDYRVFYLIIFAIANMTLPLSLFLGNFFLSMASEDMFYWIIKAQTPFQYAWYYPVIDGIPIADVIEVIISVFSYYYYVRHHNETTNIFHFIFVDTDNTSSSQQQQCGMWYAFTHGKAHDEYGALTLVLVSVLAILSSHSLSLTAFATLSLIVGTGIFVDLWAHCFHH</sequence>